<evidence type="ECO:0000255" key="1">
    <source>
        <dbReference type="HAMAP-Rule" id="MF_00262"/>
    </source>
</evidence>
<feature type="chain" id="PRO_0000298105" description="Cell division topological specificity factor">
    <location>
        <begin position="1"/>
        <end position="92"/>
    </location>
</feature>
<comment type="function">
    <text evidence="1">Prevents the cell division inhibition by proteins MinC and MinD at internal division sites while permitting inhibition at polar sites. This ensures cell division at the proper site by restricting the formation of a division septum at the midpoint of the long axis of the cell.</text>
</comment>
<comment type="similarity">
    <text evidence="1">Belongs to the MinE family.</text>
</comment>
<keyword id="KW-0131">Cell cycle</keyword>
<keyword id="KW-0132">Cell division</keyword>
<reference key="1">
    <citation type="journal article" date="2005" name="Proc. Natl. Acad. Sci. U.S.A.">
        <title>The psychrophilic lifestyle as revealed by the genome sequence of Colwellia psychrerythraea 34H through genomic and proteomic analyses.</title>
        <authorList>
            <person name="Methe B.A."/>
            <person name="Nelson K.E."/>
            <person name="Deming J.W."/>
            <person name="Momen B."/>
            <person name="Melamud E."/>
            <person name="Zhang X."/>
            <person name="Moult J."/>
            <person name="Madupu R."/>
            <person name="Nelson W.C."/>
            <person name="Dodson R.J."/>
            <person name="Brinkac L.M."/>
            <person name="Daugherty S.C."/>
            <person name="Durkin A.S."/>
            <person name="DeBoy R.T."/>
            <person name="Kolonay J.F."/>
            <person name="Sullivan S.A."/>
            <person name="Zhou L."/>
            <person name="Davidsen T.M."/>
            <person name="Wu M."/>
            <person name="Huston A.L."/>
            <person name="Lewis M."/>
            <person name="Weaver B."/>
            <person name="Weidman J.F."/>
            <person name="Khouri H."/>
            <person name="Utterback T.R."/>
            <person name="Feldblyum T.V."/>
            <person name="Fraser C.M."/>
        </authorList>
    </citation>
    <scope>NUCLEOTIDE SEQUENCE [LARGE SCALE GENOMIC DNA]</scope>
    <source>
        <strain>34H / ATCC BAA-681</strain>
    </source>
</reference>
<organism>
    <name type="scientific">Colwellia psychrerythraea (strain 34H / ATCC BAA-681)</name>
    <name type="common">Vibrio psychroerythus</name>
    <dbReference type="NCBI Taxonomy" id="167879"/>
    <lineage>
        <taxon>Bacteria</taxon>
        <taxon>Pseudomonadati</taxon>
        <taxon>Pseudomonadota</taxon>
        <taxon>Gammaproteobacteria</taxon>
        <taxon>Alteromonadales</taxon>
        <taxon>Colwelliaceae</taxon>
        <taxon>Colwellia</taxon>
    </lineage>
</organism>
<name>MINE_COLP3</name>
<accession>Q481H1</accession>
<gene>
    <name evidence="1" type="primary">minE</name>
    <name type="ordered locus">CPS_2583</name>
</gene>
<proteinExistence type="inferred from homology"/>
<dbReference type="EMBL" id="CP000083">
    <property type="protein sequence ID" value="AAZ26247.1"/>
    <property type="molecule type" value="Genomic_DNA"/>
</dbReference>
<dbReference type="RefSeq" id="WP_011043392.1">
    <property type="nucleotide sequence ID" value="NC_003910.7"/>
</dbReference>
<dbReference type="SMR" id="Q481H1"/>
<dbReference type="STRING" id="167879.CPS_2583"/>
<dbReference type="KEGG" id="cps:CPS_2583"/>
<dbReference type="eggNOG" id="COG0851">
    <property type="taxonomic scope" value="Bacteria"/>
</dbReference>
<dbReference type="HOGENOM" id="CLU_137929_2_2_6"/>
<dbReference type="Proteomes" id="UP000000547">
    <property type="component" value="Chromosome"/>
</dbReference>
<dbReference type="GO" id="GO:0051301">
    <property type="term" value="P:cell division"/>
    <property type="evidence" value="ECO:0007669"/>
    <property type="project" value="UniProtKB-KW"/>
</dbReference>
<dbReference type="GO" id="GO:0032955">
    <property type="term" value="P:regulation of division septum assembly"/>
    <property type="evidence" value="ECO:0007669"/>
    <property type="project" value="InterPro"/>
</dbReference>
<dbReference type="FunFam" id="3.30.1070.10:FF:000001">
    <property type="entry name" value="Cell division topological specificity factor"/>
    <property type="match status" value="1"/>
</dbReference>
<dbReference type="Gene3D" id="3.30.1070.10">
    <property type="entry name" value="Cell division topological specificity factor MinE"/>
    <property type="match status" value="1"/>
</dbReference>
<dbReference type="HAMAP" id="MF_00262">
    <property type="entry name" value="MinE"/>
    <property type="match status" value="1"/>
</dbReference>
<dbReference type="InterPro" id="IPR005527">
    <property type="entry name" value="MinE"/>
</dbReference>
<dbReference type="InterPro" id="IPR036707">
    <property type="entry name" value="MinE_sf"/>
</dbReference>
<dbReference type="NCBIfam" id="TIGR01215">
    <property type="entry name" value="minE"/>
    <property type="match status" value="1"/>
</dbReference>
<dbReference type="NCBIfam" id="NF001422">
    <property type="entry name" value="PRK00296.1"/>
    <property type="match status" value="1"/>
</dbReference>
<dbReference type="Pfam" id="PF03776">
    <property type="entry name" value="MinE"/>
    <property type="match status" value="1"/>
</dbReference>
<dbReference type="SUPFAM" id="SSF55229">
    <property type="entry name" value="Cell division protein MinE topological specificity domain"/>
    <property type="match status" value="1"/>
</dbReference>
<sequence>MALLDYFLRKKEKQVTTASKAKERLQIIVAHERNSRNKQPDYLPQLTEDILKVLRKYIKVSDESFSINLDKKDGDLNVLELNIELHDEQTAD</sequence>
<protein>
    <recommendedName>
        <fullName evidence="1">Cell division topological specificity factor</fullName>
    </recommendedName>
</protein>